<protein>
    <recommendedName>
        <fullName>Glucan endo-1,3-beta-glucosidase</fullName>
        <ecNumber>3.2.1.39</ecNumber>
    </recommendedName>
    <alternativeName>
        <fullName>(1-&gt;3)-beta-glucan endohydrolase</fullName>
        <shortName>(1-&gt;3)-beta-glucanase</shortName>
    </alternativeName>
    <alternativeName>
        <fullName>Beta-1,3-endoglucanase</fullName>
    </alternativeName>
</protein>
<dbReference type="EC" id="3.2.1.39"/>
<dbReference type="EMBL" id="X54431">
    <property type="protein sequence ID" value="CAA38303.1"/>
    <property type="molecule type" value="mRNA"/>
</dbReference>
<dbReference type="PIR" id="S12014">
    <property type="entry name" value="S12014"/>
</dbReference>
<dbReference type="RefSeq" id="NP_001312176.1">
    <property type="nucleotide sequence ID" value="NM_001325247.1"/>
</dbReference>
<dbReference type="SMR" id="P23433"/>
<dbReference type="STRING" id="4097.P23433"/>
<dbReference type="CAZy" id="GH17">
    <property type="family name" value="Glycoside Hydrolase Family 17"/>
</dbReference>
<dbReference type="GlyCosmos" id="P23433">
    <property type="glycosylation" value="3 sites, No reported glycans"/>
</dbReference>
<dbReference type="PaxDb" id="4097-P23433"/>
<dbReference type="GeneID" id="107777766"/>
<dbReference type="KEGG" id="nta:107777766"/>
<dbReference type="OrthoDB" id="941679at2759"/>
<dbReference type="Proteomes" id="UP000084051">
    <property type="component" value="Unplaced"/>
</dbReference>
<dbReference type="GO" id="GO:0005576">
    <property type="term" value="C:extracellular region"/>
    <property type="evidence" value="ECO:0007669"/>
    <property type="project" value="UniProtKB-KW"/>
</dbReference>
<dbReference type="GO" id="GO:0042973">
    <property type="term" value="F:glucan endo-1,3-beta-D-glucosidase activity"/>
    <property type="evidence" value="ECO:0007669"/>
    <property type="project" value="UniProtKB-EC"/>
</dbReference>
<dbReference type="GO" id="GO:0005975">
    <property type="term" value="P:carbohydrate metabolic process"/>
    <property type="evidence" value="ECO:0007669"/>
    <property type="project" value="InterPro"/>
</dbReference>
<dbReference type="GO" id="GO:0009626">
    <property type="term" value="P:plant-type hypersensitive response"/>
    <property type="evidence" value="ECO:0007669"/>
    <property type="project" value="UniProtKB-KW"/>
</dbReference>
<dbReference type="FunFam" id="3.20.20.80:FF:000010">
    <property type="entry name" value="glucan endo-1,3-beta-glucosidase, basic"/>
    <property type="match status" value="1"/>
</dbReference>
<dbReference type="Gene3D" id="3.20.20.80">
    <property type="entry name" value="Glycosidases"/>
    <property type="match status" value="1"/>
</dbReference>
<dbReference type="InterPro" id="IPR000490">
    <property type="entry name" value="Glyco_hydro_17"/>
</dbReference>
<dbReference type="InterPro" id="IPR044965">
    <property type="entry name" value="Glyco_hydro_17_plant"/>
</dbReference>
<dbReference type="InterPro" id="IPR017853">
    <property type="entry name" value="Glycoside_hydrolase_SF"/>
</dbReference>
<dbReference type="PANTHER" id="PTHR32227">
    <property type="entry name" value="GLUCAN ENDO-1,3-BETA-GLUCOSIDASE BG1-RELATED-RELATED"/>
    <property type="match status" value="1"/>
</dbReference>
<dbReference type="Pfam" id="PF00332">
    <property type="entry name" value="Glyco_hydro_17"/>
    <property type="match status" value="1"/>
</dbReference>
<dbReference type="SUPFAM" id="SSF51445">
    <property type="entry name" value="(Trans)glycosidases"/>
    <property type="match status" value="1"/>
</dbReference>
<dbReference type="PROSITE" id="PS00587">
    <property type="entry name" value="GLYCOSYL_HYDROL_F17"/>
    <property type="match status" value="1"/>
</dbReference>
<reference key="1">
    <citation type="journal article" date="1990" name="EMBO J.">
        <title>A major stylar matrix polypeptide (sp41) is a member of the pathogenesis-related proteins superclass.</title>
        <authorList>
            <person name="Ori N."/>
            <person name="Sessa G."/>
            <person name="Lotan T."/>
            <person name="Himmelhoch S."/>
            <person name="Fluhr R."/>
        </authorList>
    </citation>
    <scope>NUCLEOTIDE SEQUENCE [MRNA]</scope>
    <scope>PARTIAL PROTEIN SEQUENCE</scope>
    <scope>PYROGLUTAMATE FORMATION AT GLN-33</scope>
    <scope>GLYCOSYLATION</scope>
    <scope>SUBCELLULAR LOCATION</scope>
    <scope>DEVELOPMENTAL STAGE</scope>
</reference>
<evidence type="ECO:0000250" key="1">
    <source>
        <dbReference type="UniProtKB" id="O22317"/>
    </source>
</evidence>
<evidence type="ECO:0000255" key="2"/>
<evidence type="ECO:0000269" key="3">
    <source>
    </source>
</evidence>
<evidence type="ECO:0000305" key="4"/>
<sequence>MALWYLFNKRSLGAAVLILVGLLMCNIQITGAQSNIGVCYGEIANNLPSEQDVINLYKANGIRKMRIYYPDTNIFKALNGSNIEIILEVPNQDLEALANSSIANGWVQDNIRSHFPYVKFKYISIGNEVSPTNNGQYSQFLLHAMKNVYNALAAAGLQDKIKVSTATYSGLLANTYPPKDSIFREELKSFINPIIEFLARNNLPLLANIYPYFGHIYNTVDVPLSYALFNQQETNSTGYQNLFDALLDSIYFAVEKAGGPNVEIIVSESGWPSEGNSAATIENAQTYYRNLVNHVKGGAGTPKKPGRIIETYLFAMFDENEKQGEITEKHFGLFYPNRAAKYQLNFMYSDS</sequence>
<feature type="signal peptide">
    <location>
        <begin position="1"/>
        <end position="32"/>
    </location>
</feature>
<feature type="chain" id="PRO_0000011876" description="Glucan endo-1,3-beta-glucosidase">
    <location>
        <begin position="33"/>
        <end position="351"/>
    </location>
</feature>
<feature type="active site" description="Proton donor" evidence="1">
    <location>
        <position position="128"/>
    </location>
</feature>
<feature type="active site" description="Nucleophile" evidence="1">
    <location>
        <position position="268"/>
    </location>
</feature>
<feature type="modified residue" description="Pyrrolidone carboxylic acid" evidence="3">
    <location>
        <position position="33"/>
    </location>
</feature>
<feature type="glycosylation site" description="N-linked (GlcNAc...) asparagine" evidence="2">
    <location>
        <position position="79"/>
    </location>
</feature>
<feature type="glycosylation site" description="N-linked (GlcNAc...) asparagine" evidence="2">
    <location>
        <position position="99"/>
    </location>
</feature>
<feature type="glycosylation site" description="N-linked (GlcNAc...) asparagine" evidence="2">
    <location>
        <position position="235"/>
    </location>
</feature>
<proteinExistence type="evidence at protein level"/>
<organism>
    <name type="scientific">Nicotiana tabacum</name>
    <name type="common">Common tobacco</name>
    <dbReference type="NCBI Taxonomy" id="4097"/>
    <lineage>
        <taxon>Eukaryota</taxon>
        <taxon>Viridiplantae</taxon>
        <taxon>Streptophyta</taxon>
        <taxon>Embryophyta</taxon>
        <taxon>Tracheophyta</taxon>
        <taxon>Spermatophyta</taxon>
        <taxon>Magnoliopsida</taxon>
        <taxon>eudicotyledons</taxon>
        <taxon>Gunneridae</taxon>
        <taxon>Pentapetalae</taxon>
        <taxon>asterids</taxon>
        <taxon>lamiids</taxon>
        <taxon>Solanales</taxon>
        <taxon>Solanaceae</taxon>
        <taxon>Nicotianoideae</taxon>
        <taxon>Nicotianeae</taxon>
        <taxon>Nicotiana</taxon>
    </lineage>
</organism>
<comment type="function">
    <text>Implicated in the defense of plants against pathogens.</text>
</comment>
<comment type="catalytic activity">
    <reaction>
        <text>Hydrolysis of (1-&gt;3)-beta-D-glucosidic linkages in (1-&gt;3)-beta-D-glucans.</text>
        <dbReference type="EC" id="3.2.1.39"/>
    </reaction>
</comment>
<comment type="subcellular location">
    <subcellularLocation>
        <location evidence="3">Secreted</location>
        <location evidence="3">Extracellular space</location>
        <location evidence="3">Extracellular matrix</location>
    </subcellularLocation>
    <text>Stylar secretory matrix.</text>
</comment>
<comment type="developmental stage">
    <text evidence="3">Maximal level of accumulation during anthesis.</text>
</comment>
<comment type="PTM">
    <text evidence="3">Glycosylated.</text>
</comment>
<comment type="PTM">
    <text evidence="3">The N-terminus is blocked.</text>
</comment>
<comment type="similarity">
    <text evidence="4">Belongs to the glycosyl hydrolase 17 family.</text>
</comment>
<gene>
    <name type="primary">SP41B</name>
</gene>
<accession>P23433</accession>
<name>E13D_TOBAC</name>
<keyword id="KW-0903">Direct protein sequencing</keyword>
<keyword id="KW-0272">Extracellular matrix</keyword>
<keyword id="KW-0325">Glycoprotein</keyword>
<keyword id="KW-0326">Glycosidase</keyword>
<keyword id="KW-0378">Hydrolase</keyword>
<keyword id="KW-0381">Hypersensitive response</keyword>
<keyword id="KW-0568">Pathogenesis-related protein</keyword>
<keyword id="KW-0611">Plant defense</keyword>
<keyword id="KW-0873">Pyrrolidone carboxylic acid</keyword>
<keyword id="KW-1185">Reference proteome</keyword>
<keyword id="KW-0964">Secreted</keyword>
<keyword id="KW-0732">Signal</keyword>